<dbReference type="EC" id="1.1.1.27" evidence="1"/>
<dbReference type="EMBL" id="AF036708">
    <property type="protein sequence ID" value="AAB95409.1"/>
    <property type="molecule type" value="Genomic_DNA"/>
</dbReference>
<dbReference type="EMBL" id="AE015450">
    <property type="protein sequence ID" value="AAP56423.1"/>
    <property type="molecule type" value="Genomic_DNA"/>
</dbReference>
<dbReference type="RefSeq" id="WP_011113302.1">
    <property type="nucleotide sequence ID" value="NC_004829.2"/>
</dbReference>
<dbReference type="SMR" id="O52354"/>
<dbReference type="KEGG" id="mga:MGA_0746"/>
<dbReference type="PATRIC" id="fig|233150.7.peg.77"/>
<dbReference type="HOGENOM" id="CLU_045401_1_2_14"/>
<dbReference type="OrthoDB" id="9802969at2"/>
<dbReference type="UniPathway" id="UPA00554">
    <property type="reaction ID" value="UER00611"/>
</dbReference>
<dbReference type="Proteomes" id="UP000001418">
    <property type="component" value="Chromosome"/>
</dbReference>
<dbReference type="GO" id="GO:0005737">
    <property type="term" value="C:cytoplasm"/>
    <property type="evidence" value="ECO:0007669"/>
    <property type="project" value="UniProtKB-SubCell"/>
</dbReference>
<dbReference type="GO" id="GO:0004459">
    <property type="term" value="F:L-lactate dehydrogenase activity"/>
    <property type="evidence" value="ECO:0007669"/>
    <property type="project" value="UniProtKB-UniRule"/>
</dbReference>
<dbReference type="GO" id="GO:0006096">
    <property type="term" value="P:glycolytic process"/>
    <property type="evidence" value="ECO:0007669"/>
    <property type="project" value="UniProtKB-UniRule"/>
</dbReference>
<dbReference type="GO" id="GO:0006089">
    <property type="term" value="P:lactate metabolic process"/>
    <property type="evidence" value="ECO:0007669"/>
    <property type="project" value="TreeGrafter"/>
</dbReference>
<dbReference type="CDD" id="cd05291">
    <property type="entry name" value="HicDH_like"/>
    <property type="match status" value="1"/>
</dbReference>
<dbReference type="Gene3D" id="3.90.110.10">
    <property type="entry name" value="Lactate dehydrogenase/glycoside hydrolase, family 4, C-terminal"/>
    <property type="match status" value="1"/>
</dbReference>
<dbReference type="Gene3D" id="3.40.50.720">
    <property type="entry name" value="NAD(P)-binding Rossmann-like Domain"/>
    <property type="match status" value="1"/>
</dbReference>
<dbReference type="HAMAP" id="MF_00488">
    <property type="entry name" value="Lactate_dehydrog"/>
    <property type="match status" value="1"/>
</dbReference>
<dbReference type="InterPro" id="IPR001557">
    <property type="entry name" value="L-lactate/malate_DH"/>
</dbReference>
<dbReference type="InterPro" id="IPR011304">
    <property type="entry name" value="L-lactate_DH"/>
</dbReference>
<dbReference type="InterPro" id="IPR022383">
    <property type="entry name" value="Lactate/malate_DH_C"/>
</dbReference>
<dbReference type="InterPro" id="IPR001236">
    <property type="entry name" value="Lactate/malate_DH_N"/>
</dbReference>
<dbReference type="InterPro" id="IPR015955">
    <property type="entry name" value="Lactate_DH/Glyco_Ohase_4_C"/>
</dbReference>
<dbReference type="InterPro" id="IPR036291">
    <property type="entry name" value="NAD(P)-bd_dom_sf"/>
</dbReference>
<dbReference type="PANTHER" id="PTHR43128">
    <property type="entry name" value="L-2-HYDROXYCARBOXYLATE DEHYDROGENASE (NAD(P)(+))"/>
    <property type="match status" value="1"/>
</dbReference>
<dbReference type="PANTHER" id="PTHR43128:SF16">
    <property type="entry name" value="L-LACTATE DEHYDROGENASE"/>
    <property type="match status" value="1"/>
</dbReference>
<dbReference type="Pfam" id="PF02866">
    <property type="entry name" value="Ldh_1_C"/>
    <property type="match status" value="1"/>
</dbReference>
<dbReference type="Pfam" id="PF00056">
    <property type="entry name" value="Ldh_1_N"/>
    <property type="match status" value="1"/>
</dbReference>
<dbReference type="PIRSF" id="PIRSF000102">
    <property type="entry name" value="Lac_mal_DH"/>
    <property type="match status" value="1"/>
</dbReference>
<dbReference type="PRINTS" id="PR00086">
    <property type="entry name" value="LLDHDRGNASE"/>
</dbReference>
<dbReference type="SUPFAM" id="SSF56327">
    <property type="entry name" value="LDH C-terminal domain-like"/>
    <property type="match status" value="1"/>
</dbReference>
<dbReference type="SUPFAM" id="SSF51735">
    <property type="entry name" value="NAD(P)-binding Rossmann-fold domains"/>
    <property type="match status" value="1"/>
</dbReference>
<protein>
    <recommendedName>
        <fullName evidence="1">L-lactate dehydrogenase</fullName>
        <shortName evidence="1">L-LDH</shortName>
        <ecNumber evidence="1">1.1.1.27</ecNumber>
    </recommendedName>
</protein>
<organism>
    <name type="scientific">Mycoplasmoides gallisepticum (strain R(low / passage 15 / clone 2))</name>
    <name type="common">Mycoplasma gallisepticum</name>
    <dbReference type="NCBI Taxonomy" id="710127"/>
    <lineage>
        <taxon>Bacteria</taxon>
        <taxon>Bacillati</taxon>
        <taxon>Mycoplasmatota</taxon>
        <taxon>Mycoplasmoidales</taxon>
        <taxon>Mycoplasmoidaceae</taxon>
        <taxon>Mycoplasmoides</taxon>
    </lineage>
</organism>
<reference key="1">
    <citation type="journal article" date="2000" name="Mol. Biol. (Mosk.)">
        <title>Determination and analysis of the nucleotide sequence of a segment of a Mycoplasma gallisepticum strain A5969 chromosome, containing operons S10 and rrn23-5.</title>
        <authorList>
            <person name="Skamrov A.V."/>
            <person name="Gol'dman M.A."/>
            <person name="Feoktistova E.S."/>
            <person name="Bibilashvili R.S."/>
        </authorList>
    </citation>
    <scope>NUCLEOTIDE SEQUENCE [GENOMIC DNA]</scope>
    <source>
        <strain>A5969Var.B</strain>
    </source>
</reference>
<reference key="2">
    <citation type="journal article" date="2003" name="Microbiology">
        <title>The complete genome sequence of the avian pathogen Mycoplasma gallisepticum strain R(low).</title>
        <authorList>
            <person name="Papazisi L."/>
            <person name="Gorton T.S."/>
            <person name="Kutish G."/>
            <person name="Markham P.F."/>
            <person name="Browning G.F."/>
            <person name="Nguyen D.K."/>
            <person name="Swartzell S."/>
            <person name="Madan A."/>
            <person name="Mahairas G."/>
            <person name="Geary S.J."/>
        </authorList>
    </citation>
    <scope>NUCLEOTIDE SEQUENCE [LARGE SCALE GENOMIC DNA]</scope>
    <source>
        <strain>R(low / passage 15 / clone 2)</strain>
    </source>
</reference>
<accession>O52354</accession>
<sequence>MKKIAVIGCGFVGSTYILDLLQQGVQADYLLVDKNTNLADGHVRDLRDSKSLKSHNGSTFNVGTYDDLKDADVVAITASIPTVPTADGEVFTDRLQLMTANVKILNEIALELKRVGFKGLSIIPTNPCDVMAGVYQKVTGFDPHKIISTGCQLETMRTRKMISEALGVNSDSVEGFVVGEHGSGAIVPWSVFRVGNVPMKQLIAEGKIKEEYVKDIFSRVVKEAFEIIKFKKATYFGIAESMSLITRAYIYNLNTVLGVGVQLDDKYVASGIYFTVPAVVGKHGWKLHSKLQLSQEEQAAFDKSALNIQKVTKDALDLIGFKN</sequence>
<gene>
    <name evidence="1" type="primary">ldh</name>
    <name type="synonym">mdh</name>
    <name type="ordered locus">MYCGA0730</name>
    <name type="ORF">MGA_0746</name>
</gene>
<name>LDH_MYCGA</name>
<keyword id="KW-0963">Cytoplasm</keyword>
<keyword id="KW-0520">NAD</keyword>
<keyword id="KW-0560">Oxidoreductase</keyword>
<keyword id="KW-1185">Reference proteome</keyword>
<evidence type="ECO:0000255" key="1">
    <source>
        <dbReference type="HAMAP-Rule" id="MF_00488"/>
    </source>
</evidence>
<evidence type="ECO:0000305" key="2"/>
<feature type="chain" id="PRO_0000168367" description="L-lactate dehydrogenase">
    <location>
        <begin position="1"/>
        <end position="323"/>
    </location>
</feature>
<feature type="active site" description="Proton acceptor" evidence="1">
    <location>
        <position position="181"/>
    </location>
</feature>
<feature type="binding site" evidence="1">
    <location>
        <position position="12"/>
    </location>
    <ligand>
        <name>NAD(+)</name>
        <dbReference type="ChEBI" id="CHEBI:57540"/>
    </ligand>
</feature>
<feature type="binding site" evidence="1">
    <location>
        <position position="33"/>
    </location>
    <ligand>
        <name>NAD(+)</name>
        <dbReference type="ChEBI" id="CHEBI:57540"/>
    </ligand>
</feature>
<feature type="binding site" evidence="1">
    <location>
        <position position="65"/>
    </location>
    <ligand>
        <name>NAD(+)</name>
        <dbReference type="ChEBI" id="CHEBI:57540"/>
    </ligand>
</feature>
<feature type="binding site" evidence="1">
    <location>
        <position position="94"/>
    </location>
    <ligand>
        <name>substrate</name>
    </ligand>
</feature>
<feature type="binding site" evidence="1">
    <location>
        <begin position="126"/>
        <end position="129"/>
    </location>
    <ligand>
        <name>substrate</name>
    </ligand>
</feature>
<feature type="binding site" evidence="1">
    <location>
        <position position="149"/>
    </location>
    <ligand>
        <name>NAD(+)</name>
        <dbReference type="ChEBI" id="CHEBI:57540"/>
    </ligand>
</feature>
<feature type="binding site" evidence="1">
    <location>
        <begin position="154"/>
        <end position="157"/>
    </location>
    <ligand>
        <name>substrate</name>
    </ligand>
</feature>
<feature type="binding site" evidence="1">
    <location>
        <position position="234"/>
    </location>
    <ligand>
        <name>substrate</name>
    </ligand>
</feature>
<feature type="sequence conflict" description="In Ref. 1; AAB95409." evidence="2" ref="1">
    <original>S</original>
    <variation>P</variation>
    <location>
        <position position="218"/>
    </location>
</feature>
<feature type="sequence conflict" description="In Ref. 1; AAB95409." evidence="2" ref="1">
    <original>T</original>
    <variation>M</variation>
    <location>
        <position position="255"/>
    </location>
</feature>
<comment type="function">
    <text evidence="1">Catalyzes the conversion of lactate to pyruvate.</text>
</comment>
<comment type="catalytic activity">
    <reaction evidence="1">
        <text>(S)-lactate + NAD(+) = pyruvate + NADH + H(+)</text>
        <dbReference type="Rhea" id="RHEA:23444"/>
        <dbReference type="ChEBI" id="CHEBI:15361"/>
        <dbReference type="ChEBI" id="CHEBI:15378"/>
        <dbReference type="ChEBI" id="CHEBI:16651"/>
        <dbReference type="ChEBI" id="CHEBI:57540"/>
        <dbReference type="ChEBI" id="CHEBI:57945"/>
        <dbReference type="EC" id="1.1.1.27"/>
    </reaction>
</comment>
<comment type="pathway">
    <text evidence="1">Fermentation; pyruvate fermentation to lactate; (S)-lactate from pyruvate: step 1/1.</text>
</comment>
<comment type="subunit">
    <text evidence="1">Homotetramer.</text>
</comment>
<comment type="subcellular location">
    <subcellularLocation>
        <location evidence="1">Cytoplasm</location>
    </subcellularLocation>
</comment>
<comment type="similarity">
    <text evidence="1 2">Belongs to the LDH/MDH superfamily. LDH family.</text>
</comment>
<proteinExistence type="inferred from homology"/>